<reference key="1">
    <citation type="journal article" date="2011" name="J. Bacteriol.">
        <title>Comparative genomics of 28 Salmonella enterica isolates: evidence for CRISPR-mediated adaptive sublineage evolution.</title>
        <authorList>
            <person name="Fricke W.F."/>
            <person name="Mammel M.K."/>
            <person name="McDermott P.F."/>
            <person name="Tartera C."/>
            <person name="White D.G."/>
            <person name="Leclerc J.E."/>
            <person name="Ravel J."/>
            <person name="Cebula T.A."/>
        </authorList>
    </citation>
    <scope>NUCLEOTIDE SEQUENCE [LARGE SCALE GENOMIC DNA]</scope>
    <source>
        <strain>SL483</strain>
    </source>
</reference>
<dbReference type="EC" id="2.7.7.27" evidence="1"/>
<dbReference type="EMBL" id="CP001138">
    <property type="protein sequence ID" value="ACH51157.1"/>
    <property type="molecule type" value="Genomic_DNA"/>
</dbReference>
<dbReference type="RefSeq" id="WP_000253994.1">
    <property type="nucleotide sequence ID" value="NC_011149.1"/>
</dbReference>
<dbReference type="SMR" id="B5F8Q2"/>
<dbReference type="KEGG" id="sea:SeAg_B3737"/>
<dbReference type="HOGENOM" id="CLU_029499_14_1_6"/>
<dbReference type="UniPathway" id="UPA00164"/>
<dbReference type="Proteomes" id="UP000008819">
    <property type="component" value="Chromosome"/>
</dbReference>
<dbReference type="GO" id="GO:0005524">
    <property type="term" value="F:ATP binding"/>
    <property type="evidence" value="ECO:0007669"/>
    <property type="project" value="UniProtKB-KW"/>
</dbReference>
<dbReference type="GO" id="GO:0008878">
    <property type="term" value="F:glucose-1-phosphate adenylyltransferase activity"/>
    <property type="evidence" value="ECO:0007669"/>
    <property type="project" value="UniProtKB-UniRule"/>
</dbReference>
<dbReference type="GO" id="GO:0005978">
    <property type="term" value="P:glycogen biosynthetic process"/>
    <property type="evidence" value="ECO:0007669"/>
    <property type="project" value="UniProtKB-UniRule"/>
</dbReference>
<dbReference type="CDD" id="cd02508">
    <property type="entry name" value="ADP_Glucose_PP"/>
    <property type="match status" value="1"/>
</dbReference>
<dbReference type="CDD" id="cd04651">
    <property type="entry name" value="LbH_G1P_AT_C"/>
    <property type="match status" value="1"/>
</dbReference>
<dbReference type="FunFam" id="2.160.10.10:FF:000006">
    <property type="entry name" value="Glucose-1-phosphate adenylyltransferase"/>
    <property type="match status" value="1"/>
</dbReference>
<dbReference type="FunFam" id="3.90.550.10:FF:000014">
    <property type="entry name" value="Glucose-1-phosphate adenylyltransferase"/>
    <property type="match status" value="1"/>
</dbReference>
<dbReference type="Gene3D" id="2.160.10.10">
    <property type="entry name" value="Hexapeptide repeat proteins"/>
    <property type="match status" value="1"/>
</dbReference>
<dbReference type="Gene3D" id="3.90.550.10">
    <property type="entry name" value="Spore Coat Polysaccharide Biosynthesis Protein SpsA, Chain A"/>
    <property type="match status" value="1"/>
</dbReference>
<dbReference type="HAMAP" id="MF_00624">
    <property type="entry name" value="GlgC"/>
    <property type="match status" value="1"/>
</dbReference>
<dbReference type="InterPro" id="IPR011831">
    <property type="entry name" value="ADP-Glc_PPase"/>
</dbReference>
<dbReference type="InterPro" id="IPR005836">
    <property type="entry name" value="ADP_Glu_pyroP_CS"/>
</dbReference>
<dbReference type="InterPro" id="IPR023049">
    <property type="entry name" value="GlgC_bac"/>
</dbReference>
<dbReference type="InterPro" id="IPR056818">
    <property type="entry name" value="GlmU/GlgC-like_hexapep"/>
</dbReference>
<dbReference type="InterPro" id="IPR005835">
    <property type="entry name" value="NTP_transferase_dom"/>
</dbReference>
<dbReference type="InterPro" id="IPR029044">
    <property type="entry name" value="Nucleotide-diphossugar_trans"/>
</dbReference>
<dbReference type="InterPro" id="IPR011004">
    <property type="entry name" value="Trimer_LpxA-like_sf"/>
</dbReference>
<dbReference type="NCBIfam" id="TIGR02091">
    <property type="entry name" value="glgC"/>
    <property type="match status" value="1"/>
</dbReference>
<dbReference type="NCBIfam" id="NF001947">
    <property type="entry name" value="PRK00725.1"/>
    <property type="match status" value="1"/>
</dbReference>
<dbReference type="NCBIfam" id="NF002023">
    <property type="entry name" value="PRK00844.1"/>
    <property type="match status" value="1"/>
</dbReference>
<dbReference type="PANTHER" id="PTHR43523:SF2">
    <property type="entry name" value="GLUCOSE-1-PHOSPHATE ADENYLYLTRANSFERASE"/>
    <property type="match status" value="1"/>
</dbReference>
<dbReference type="PANTHER" id="PTHR43523">
    <property type="entry name" value="GLUCOSE-1-PHOSPHATE ADENYLYLTRANSFERASE-RELATED"/>
    <property type="match status" value="1"/>
</dbReference>
<dbReference type="Pfam" id="PF24894">
    <property type="entry name" value="Hexapep_GlmU"/>
    <property type="match status" value="1"/>
</dbReference>
<dbReference type="Pfam" id="PF00483">
    <property type="entry name" value="NTP_transferase"/>
    <property type="match status" value="1"/>
</dbReference>
<dbReference type="SUPFAM" id="SSF53448">
    <property type="entry name" value="Nucleotide-diphospho-sugar transferases"/>
    <property type="match status" value="1"/>
</dbReference>
<dbReference type="SUPFAM" id="SSF51161">
    <property type="entry name" value="Trimeric LpxA-like enzymes"/>
    <property type="match status" value="1"/>
</dbReference>
<dbReference type="PROSITE" id="PS00808">
    <property type="entry name" value="ADP_GLC_PYROPHOSPH_1"/>
    <property type="match status" value="1"/>
</dbReference>
<dbReference type="PROSITE" id="PS00809">
    <property type="entry name" value="ADP_GLC_PYROPHOSPH_2"/>
    <property type="match status" value="1"/>
</dbReference>
<dbReference type="PROSITE" id="PS00810">
    <property type="entry name" value="ADP_GLC_PYROPHOSPH_3"/>
    <property type="match status" value="1"/>
</dbReference>
<keyword id="KW-0021">Allosteric enzyme</keyword>
<keyword id="KW-0067">ATP-binding</keyword>
<keyword id="KW-0119">Carbohydrate metabolism</keyword>
<keyword id="KW-0320">Glycogen biosynthesis</keyword>
<keyword id="KW-0321">Glycogen metabolism</keyword>
<keyword id="KW-0547">Nucleotide-binding</keyword>
<keyword id="KW-0548">Nucleotidyltransferase</keyword>
<keyword id="KW-0808">Transferase</keyword>
<comment type="function">
    <text evidence="1">Involved in the biosynthesis of ADP-glucose, a building block required for the elongation reactions to produce glycogen. Catalyzes the reaction between ATP and alpha-D-glucose 1-phosphate (G1P) to produce pyrophosphate and ADP-Glc.</text>
</comment>
<comment type="catalytic activity">
    <reaction evidence="1">
        <text>alpha-D-glucose 1-phosphate + ATP + H(+) = ADP-alpha-D-glucose + diphosphate</text>
        <dbReference type="Rhea" id="RHEA:12120"/>
        <dbReference type="ChEBI" id="CHEBI:15378"/>
        <dbReference type="ChEBI" id="CHEBI:30616"/>
        <dbReference type="ChEBI" id="CHEBI:33019"/>
        <dbReference type="ChEBI" id="CHEBI:57498"/>
        <dbReference type="ChEBI" id="CHEBI:58601"/>
        <dbReference type="EC" id="2.7.7.27"/>
    </reaction>
</comment>
<comment type="activity regulation">
    <text evidence="1">Allosterically activated by fructose-1,6-bisphosphate (F16BP) and inhibited by AMP.</text>
</comment>
<comment type="pathway">
    <text evidence="1">Glycan biosynthesis; glycogen biosynthesis.</text>
</comment>
<comment type="subunit">
    <text evidence="1">Homotetramer.</text>
</comment>
<comment type="similarity">
    <text evidence="1">Belongs to the bacterial/plant glucose-1-phosphate adenylyltransferase family.</text>
</comment>
<organism>
    <name type="scientific">Salmonella agona (strain SL483)</name>
    <dbReference type="NCBI Taxonomy" id="454166"/>
    <lineage>
        <taxon>Bacteria</taxon>
        <taxon>Pseudomonadati</taxon>
        <taxon>Pseudomonadota</taxon>
        <taxon>Gammaproteobacteria</taxon>
        <taxon>Enterobacterales</taxon>
        <taxon>Enterobacteriaceae</taxon>
        <taxon>Salmonella</taxon>
    </lineage>
</organism>
<proteinExistence type="inferred from homology"/>
<name>GLGC_SALA4</name>
<feature type="chain" id="PRO_1000130497" description="Glucose-1-phosphate adenylyltransferase">
    <location>
        <begin position="1"/>
        <end position="431"/>
    </location>
</feature>
<feature type="binding site" evidence="1">
    <location>
        <position position="39"/>
    </location>
    <ligand>
        <name>beta-D-fructose 1,6-bisphosphate</name>
        <dbReference type="ChEBI" id="CHEBI:32966"/>
    </ligand>
</feature>
<feature type="binding site" evidence="1">
    <location>
        <position position="40"/>
    </location>
    <ligand>
        <name>AMP</name>
        <dbReference type="ChEBI" id="CHEBI:456215"/>
    </ligand>
</feature>
<feature type="binding site" evidence="1">
    <location>
        <position position="46"/>
    </location>
    <ligand>
        <name>AMP</name>
        <dbReference type="ChEBI" id="CHEBI:456215"/>
    </ligand>
</feature>
<feature type="binding site" evidence="1">
    <location>
        <position position="52"/>
    </location>
    <ligand>
        <name>AMP</name>
        <dbReference type="ChEBI" id="CHEBI:456215"/>
    </ligand>
</feature>
<feature type="binding site" evidence="1">
    <location>
        <position position="114"/>
    </location>
    <ligand>
        <name>alpha-D-glucose 1-phosphate</name>
        <dbReference type="ChEBI" id="CHEBI:58601"/>
    </ligand>
</feature>
<feature type="binding site" evidence="1">
    <location>
        <position position="130"/>
    </location>
    <ligand>
        <name>AMP</name>
        <dbReference type="ChEBI" id="CHEBI:456215"/>
    </ligand>
</feature>
<feature type="binding site" evidence="1">
    <location>
        <position position="179"/>
    </location>
    <ligand>
        <name>alpha-D-glucose 1-phosphate</name>
        <dbReference type="ChEBI" id="CHEBI:58601"/>
    </ligand>
</feature>
<feature type="binding site" evidence="1">
    <location>
        <begin position="194"/>
        <end position="195"/>
    </location>
    <ligand>
        <name>alpha-D-glucose 1-phosphate</name>
        <dbReference type="ChEBI" id="CHEBI:58601"/>
    </ligand>
</feature>
<feature type="binding site" evidence="1">
    <location>
        <position position="212"/>
    </location>
    <ligand>
        <name>alpha-D-glucose 1-phosphate</name>
        <dbReference type="ChEBI" id="CHEBI:58601"/>
    </ligand>
</feature>
<feature type="binding site" evidence="1">
    <location>
        <position position="370"/>
    </location>
    <ligand>
        <name>AMP</name>
        <dbReference type="ChEBI" id="CHEBI:456215"/>
    </ligand>
</feature>
<feature type="binding site" evidence="1">
    <location>
        <position position="386"/>
    </location>
    <ligand>
        <name>AMP</name>
        <dbReference type="ChEBI" id="CHEBI:456215"/>
    </ligand>
</feature>
<feature type="binding site" evidence="1">
    <location>
        <begin position="419"/>
        <end position="423"/>
    </location>
    <ligand>
        <name>beta-D-fructose 1,6-bisphosphate</name>
        <dbReference type="ChEBI" id="CHEBI:32966"/>
    </ligand>
</feature>
<feature type="binding site" evidence="1">
    <location>
        <begin position="429"/>
        <end position="431"/>
    </location>
    <ligand>
        <name>beta-D-fructose 1,6-bisphosphate</name>
        <dbReference type="ChEBI" id="CHEBI:32966"/>
    </ligand>
</feature>
<feature type="site" description="Could play a key role in the communication between the regulatory and the substrate sites" evidence="1">
    <location>
        <position position="74"/>
    </location>
</feature>
<feature type="site" description="Could play a key role in the communication between the regulatory and the substrate sites" evidence="1">
    <location>
        <position position="113"/>
    </location>
</feature>
<protein>
    <recommendedName>
        <fullName evidence="1">Glucose-1-phosphate adenylyltransferase</fullName>
        <ecNumber evidence="1">2.7.7.27</ecNumber>
    </recommendedName>
    <alternativeName>
        <fullName evidence="1">ADP-glucose pyrophosphorylase</fullName>
        <shortName evidence="1">ADPGlc PPase</shortName>
    </alternativeName>
    <alternativeName>
        <fullName evidence="1">ADP-glucose synthase</fullName>
    </alternativeName>
</protein>
<gene>
    <name evidence="1" type="primary">glgC</name>
    <name type="ordered locus">SeAg_B3737</name>
</gene>
<sequence>MVSLEKNDRVMLARQLPLKSVALILAGGRGTRLKDLTNKRAKPAVHFGGKFRIIDFALSNCLNSGIRRIGVITQYQSHTLVQHIQRGWSLFSEEMNEFVDLLPAQQRMKGENWYRGTADAVTQNLDIIRRYKAEYVVILAGDHIYKQDYSRMLIDHVEKGARCTVACMPVPIKEATAFGVMAVDESDKIIDFVEKPANPPAMPGDASKALASMGIYVFDADYLYELLAADDKDDASSHDFGKDIIPKITREGMAYAHPFPLSCVQSDPQAEPYWRDVGTLEAYWKANLDLASVTPELDMYDQNWPIRTHMESLPPAKFVQDRSGSHGMTLNSLVSGGCIISGSVVVQSVLFPRVRINSFCNIDSAVLLPEVWVGRSCRLRRCVIDRACIIPEGMVIGENAEEDARRFYRSEEGIVLVTREMLRKLQVKQER</sequence>
<evidence type="ECO:0000255" key="1">
    <source>
        <dbReference type="HAMAP-Rule" id="MF_00624"/>
    </source>
</evidence>
<accession>B5F8Q2</accession>